<dbReference type="EC" id="1.1.1.85"/>
<dbReference type="EMBL" id="M75903">
    <property type="protein sequence ID" value="AAA26593.1"/>
    <property type="molecule type" value="Genomic_DNA"/>
</dbReference>
<dbReference type="PIR" id="A44851">
    <property type="entry name" value="A44851"/>
</dbReference>
<dbReference type="SMR" id="Q00412"/>
<dbReference type="BRENDA" id="1.1.1.85">
    <property type="organism ID" value="5828"/>
</dbReference>
<dbReference type="UniPathway" id="UPA00048">
    <property type="reaction ID" value="UER00072"/>
</dbReference>
<dbReference type="GO" id="GO:0005829">
    <property type="term" value="C:cytosol"/>
    <property type="evidence" value="ECO:0007669"/>
    <property type="project" value="TreeGrafter"/>
</dbReference>
<dbReference type="GO" id="GO:0003862">
    <property type="term" value="F:3-isopropylmalate dehydrogenase activity"/>
    <property type="evidence" value="ECO:0007669"/>
    <property type="project" value="UniProtKB-UniRule"/>
</dbReference>
<dbReference type="GO" id="GO:0000287">
    <property type="term" value="F:magnesium ion binding"/>
    <property type="evidence" value="ECO:0007669"/>
    <property type="project" value="InterPro"/>
</dbReference>
<dbReference type="GO" id="GO:0051287">
    <property type="term" value="F:NAD binding"/>
    <property type="evidence" value="ECO:0007669"/>
    <property type="project" value="InterPro"/>
</dbReference>
<dbReference type="GO" id="GO:0009098">
    <property type="term" value="P:L-leucine biosynthetic process"/>
    <property type="evidence" value="ECO:0007669"/>
    <property type="project" value="UniProtKB-UniRule"/>
</dbReference>
<dbReference type="FunFam" id="3.40.718.10:FF:000028">
    <property type="entry name" value="3-isopropylmalate dehydrogenase"/>
    <property type="match status" value="1"/>
</dbReference>
<dbReference type="Gene3D" id="3.40.718.10">
    <property type="entry name" value="Isopropylmalate Dehydrogenase"/>
    <property type="match status" value="1"/>
</dbReference>
<dbReference type="HAMAP" id="MF_01033">
    <property type="entry name" value="LeuB_type1"/>
    <property type="match status" value="1"/>
</dbReference>
<dbReference type="InterPro" id="IPR019818">
    <property type="entry name" value="IsoCit/isopropylmalate_DH_CS"/>
</dbReference>
<dbReference type="InterPro" id="IPR024084">
    <property type="entry name" value="IsoPropMal-DH-like_dom"/>
</dbReference>
<dbReference type="InterPro" id="IPR004429">
    <property type="entry name" value="Isopropylmalate_DH"/>
</dbReference>
<dbReference type="NCBIfam" id="TIGR00169">
    <property type="entry name" value="leuB"/>
    <property type="match status" value="1"/>
</dbReference>
<dbReference type="PANTHER" id="PTHR42979">
    <property type="entry name" value="3-ISOPROPYLMALATE DEHYDROGENASE"/>
    <property type="match status" value="1"/>
</dbReference>
<dbReference type="PANTHER" id="PTHR42979:SF1">
    <property type="entry name" value="3-ISOPROPYLMALATE DEHYDROGENASE"/>
    <property type="match status" value="1"/>
</dbReference>
<dbReference type="Pfam" id="PF00180">
    <property type="entry name" value="Iso_dh"/>
    <property type="match status" value="1"/>
</dbReference>
<dbReference type="SMART" id="SM01329">
    <property type="entry name" value="Iso_dh"/>
    <property type="match status" value="1"/>
</dbReference>
<dbReference type="SUPFAM" id="SSF53659">
    <property type="entry name" value="Isocitrate/Isopropylmalate dehydrogenase-like"/>
    <property type="match status" value="1"/>
</dbReference>
<dbReference type="PROSITE" id="PS00470">
    <property type="entry name" value="IDH_IMDH"/>
    <property type="match status" value="1"/>
</dbReference>
<gene>
    <name type="primary">leuB</name>
</gene>
<comment type="function">
    <text evidence="1">Catalyzes the oxidation of 3-carboxy-2-hydroxy-4-methylpentanoate (3-isopropylmalate) to 3-carboxy-4-methyl-2-oxopentanoate. The product decarboxylates to 4-methyl-2 oxopentanoate (By similarity).</text>
</comment>
<comment type="catalytic activity">
    <reaction>
        <text>(2R,3S)-3-isopropylmalate + NAD(+) = 4-methyl-2-oxopentanoate + CO2 + NADH</text>
        <dbReference type="Rhea" id="RHEA:32271"/>
        <dbReference type="ChEBI" id="CHEBI:16526"/>
        <dbReference type="ChEBI" id="CHEBI:17865"/>
        <dbReference type="ChEBI" id="CHEBI:35121"/>
        <dbReference type="ChEBI" id="CHEBI:57540"/>
        <dbReference type="ChEBI" id="CHEBI:57945"/>
        <dbReference type="EC" id="1.1.1.85"/>
    </reaction>
</comment>
<comment type="cofactor">
    <cofactor evidence="1">
        <name>Mg(2+)</name>
        <dbReference type="ChEBI" id="CHEBI:18420"/>
    </cofactor>
    <cofactor evidence="1">
        <name>Mn(2+)</name>
        <dbReference type="ChEBI" id="CHEBI:29035"/>
    </cofactor>
    <text evidence="1">Binds 1 Mg(2+) or Mn(2+) ion per subunit.</text>
</comment>
<comment type="pathway">
    <text>Amino-acid biosynthesis; L-leucine biosynthesis; L-leucine from 3-methyl-2-oxobutanoate: step 3/4.</text>
</comment>
<comment type="subunit">
    <text evidence="1">Homodimer.</text>
</comment>
<comment type="subcellular location">
    <subcellularLocation>
        <location evidence="1">Cytoplasm</location>
    </subcellularLocation>
</comment>
<comment type="similarity">
    <text evidence="2">Belongs to the isocitrate and isopropylmalate dehydrogenases family. LeuB type 1 subfamily.</text>
</comment>
<name>LEU3_ARTPT</name>
<proteinExistence type="inferred from homology"/>
<accession>Q00412</accession>
<protein>
    <recommendedName>
        <fullName>3-isopropylmalate dehydrogenase</fullName>
        <ecNumber>1.1.1.85</ecNumber>
    </recommendedName>
    <alternativeName>
        <fullName>3-IPM-DH</fullName>
    </alternativeName>
    <alternativeName>
        <fullName>Beta-IPM dehydrogenase</fullName>
        <shortName>IMDH</shortName>
    </alternativeName>
</protein>
<organism>
    <name type="scientific">Arthrospira platensis</name>
    <name type="common">Spirulina platensis</name>
    <dbReference type="NCBI Taxonomy" id="118562"/>
    <lineage>
        <taxon>Bacteria</taxon>
        <taxon>Bacillati</taxon>
        <taxon>Cyanobacteriota</taxon>
        <taxon>Cyanophyceae</taxon>
        <taxon>Oscillatoriophycideae</taxon>
        <taxon>Oscillatoriales</taxon>
        <taxon>Microcoleaceae</taxon>
        <taxon>Arthrospira</taxon>
    </lineage>
</organism>
<feature type="chain" id="PRO_0000083750" description="3-isopropylmalate dehydrogenase">
    <location>
        <begin position="1"/>
        <end position="355"/>
    </location>
</feature>
<feature type="binding site" evidence="1">
    <location>
        <begin position="78"/>
        <end position="91"/>
    </location>
    <ligand>
        <name>NAD(+)</name>
        <dbReference type="ChEBI" id="CHEBI:57540"/>
    </ligand>
</feature>
<feature type="binding site" evidence="1">
    <location>
        <position position="98"/>
    </location>
    <ligand>
        <name>substrate</name>
    </ligand>
</feature>
<feature type="binding site" evidence="1">
    <location>
        <position position="136"/>
    </location>
    <ligand>
        <name>substrate</name>
    </ligand>
</feature>
<feature type="binding site" evidence="1">
    <location>
        <position position="226"/>
    </location>
    <ligand>
        <name>Mg(2+)</name>
        <dbReference type="ChEBI" id="CHEBI:18420"/>
    </ligand>
</feature>
<feature type="binding site" evidence="1">
    <location>
        <position position="226"/>
    </location>
    <ligand>
        <name>substrate</name>
    </ligand>
</feature>
<feature type="binding site" evidence="1">
    <location>
        <position position="250"/>
    </location>
    <ligand>
        <name>Mg(2+)</name>
        <dbReference type="ChEBI" id="CHEBI:18420"/>
    </ligand>
</feature>
<feature type="binding site" evidence="1">
    <location>
        <position position="254"/>
    </location>
    <ligand>
        <name>Mg(2+)</name>
        <dbReference type="ChEBI" id="CHEBI:18420"/>
    </ligand>
</feature>
<feature type="binding site" evidence="1">
    <location>
        <begin position="284"/>
        <end position="296"/>
    </location>
    <ligand>
        <name>NAD(+)</name>
        <dbReference type="ChEBI" id="CHEBI:57540"/>
    </ligand>
</feature>
<feature type="site" description="Important for catalysis" evidence="1">
    <location>
        <position position="143"/>
    </location>
</feature>
<feature type="site" description="Important for catalysis" evidence="1">
    <location>
        <position position="194"/>
    </location>
</feature>
<reference key="1">
    <citation type="journal article" date="1992" name="J. Gen. Microbiol.">
        <title>Molecular cloning and sequencing of the beta-isopropylmalate dehydrogenase gene from the cyanobacterium Spirulina platensis.</title>
        <authorList>
            <person name="Bini F."/>
            <person name="de Rossi E."/>
            <person name="Barbierato L."/>
            <person name="Riccardi G."/>
        </authorList>
    </citation>
    <scope>NUCLEOTIDE SEQUENCE [GENOMIC DNA]</scope>
</reference>
<sequence>MTQNYRITLLSGDGIGPEIMAVAVDVLKAVGKQLDLNFEFKEALMGGVAIDATGEPLPEESLQACRDSDAVLLAAIGGYKWDNLPRPERPETGLLALRAGLGLFANRARLLFCPHVLDASSLKREVVEGVDIMVVRELTGGIYFGQPKGIFETETGKNEGSNTMAYGESEIDRIGRVGFETAKKRQGRLCSVDKANVLDVSQLWRDRIMALAADYPEVELSHLYVDNAAMQLVRWPKQFDTIVTGNLFGDILSDAAAMLTGSIGMLPSASLGASGPGVFEPVHGSAPDIAGQDKANPLAQVLSAAMMLRYGLDEPAASDPVEKAVLKVLDWGYPTGDIMSEGMKAVGCRKWGICY</sequence>
<keyword id="KW-0028">Amino-acid biosynthesis</keyword>
<keyword id="KW-0100">Branched-chain amino acid biosynthesis</keyword>
<keyword id="KW-0963">Cytoplasm</keyword>
<keyword id="KW-0432">Leucine biosynthesis</keyword>
<keyword id="KW-0460">Magnesium</keyword>
<keyword id="KW-0464">Manganese</keyword>
<keyword id="KW-0479">Metal-binding</keyword>
<keyword id="KW-0520">NAD</keyword>
<keyword id="KW-0560">Oxidoreductase</keyword>
<evidence type="ECO:0000250" key="1"/>
<evidence type="ECO:0000305" key="2"/>